<accession>Q5KVX9</accession>
<sequence>MTTMPNWLKQRAFLTPERIAVSDGRRTKTFAELYEAAAVWARRLAQAGVKEGDIVALLMKNRIEMIEIIHALFFLGARVLLQNVRLTSYELGWQLDDSGARLAIADEELAGSLDGDGRVLTVGAVAALPEVDVSLKETCDLEEVATIMYTSGTTGTPKGVLQTYGNHWWSAVGSALNLGLHERDCWLAAVPLFHISGLSIAMRSVIYGMPMRLQTSFDPKEANEWIMRGDVTIMSVVAAMLQRMVAELGEARYPDTFRCMLLGGGPAPRPLLEACKEKGIPVYQTYGMTETASQIATLAPEYSLTKLGSAGKPLFPAELCILKDGKPAAPHEAGEIVVKGPNVTKGYWQRPEATAQAIRGGWFFTGDIGYLDEDGFLYVLDRRSDLIISGGENVYPAEVEAVLLSHPDVEEAGVTGVENETWGQVPYAFVRLKRGASPDEAALRAFCRERLAKYKVPARIYFVDELPRNAAQKLLRRELKRLIPKTEQTF</sequence>
<gene>
    <name evidence="1" type="primary">menE</name>
    <name type="ordered locus">GK2872</name>
</gene>
<comment type="function">
    <text evidence="1">Converts 2-succinylbenzoate (OSB) to 2-succinylbenzoyl-CoA (OSB-CoA).</text>
</comment>
<comment type="catalytic activity">
    <reaction evidence="1">
        <text>2-succinylbenzoate + ATP + CoA = 2-succinylbenzoyl-CoA + AMP + diphosphate</text>
        <dbReference type="Rhea" id="RHEA:17009"/>
        <dbReference type="ChEBI" id="CHEBI:18325"/>
        <dbReference type="ChEBI" id="CHEBI:30616"/>
        <dbReference type="ChEBI" id="CHEBI:33019"/>
        <dbReference type="ChEBI" id="CHEBI:57287"/>
        <dbReference type="ChEBI" id="CHEBI:57364"/>
        <dbReference type="ChEBI" id="CHEBI:456215"/>
        <dbReference type="EC" id="6.2.1.26"/>
    </reaction>
</comment>
<comment type="pathway">
    <text evidence="1">Quinol/quinone metabolism; 1,4-dihydroxy-2-naphthoate biosynthesis; 1,4-dihydroxy-2-naphthoate from chorismate: step 5/7.</text>
</comment>
<comment type="pathway">
    <text evidence="1">Quinol/quinone metabolism; menaquinone biosynthesis.</text>
</comment>
<comment type="similarity">
    <text evidence="1">Belongs to the ATP-dependent AMP-binding enzyme family. MenE subfamily.</text>
</comment>
<evidence type="ECO:0000255" key="1">
    <source>
        <dbReference type="HAMAP-Rule" id="MF_00731"/>
    </source>
</evidence>
<reference key="1">
    <citation type="journal article" date="2004" name="Nucleic Acids Res.">
        <title>Thermoadaptation trait revealed by the genome sequence of thermophilic Geobacillus kaustophilus.</title>
        <authorList>
            <person name="Takami H."/>
            <person name="Takaki Y."/>
            <person name="Chee G.-J."/>
            <person name="Nishi S."/>
            <person name="Shimamura S."/>
            <person name="Suzuki H."/>
            <person name="Matsui S."/>
            <person name="Uchiyama I."/>
        </authorList>
    </citation>
    <scope>NUCLEOTIDE SEQUENCE [LARGE SCALE GENOMIC DNA]</scope>
    <source>
        <strain>HTA426</strain>
    </source>
</reference>
<organism>
    <name type="scientific">Geobacillus kaustophilus (strain HTA426)</name>
    <dbReference type="NCBI Taxonomy" id="235909"/>
    <lineage>
        <taxon>Bacteria</taxon>
        <taxon>Bacillati</taxon>
        <taxon>Bacillota</taxon>
        <taxon>Bacilli</taxon>
        <taxon>Bacillales</taxon>
        <taxon>Anoxybacillaceae</taxon>
        <taxon>Geobacillus</taxon>
        <taxon>Geobacillus thermoleovorans group</taxon>
    </lineage>
</organism>
<protein>
    <recommendedName>
        <fullName evidence="1">2-succinylbenzoate--CoA ligase</fullName>
        <ecNumber evidence="1">6.2.1.26</ecNumber>
    </recommendedName>
    <alternativeName>
        <fullName evidence="1">o-succinylbenzoyl-CoA synthetase</fullName>
        <shortName evidence="1">OSB-CoA synthetase</shortName>
    </alternativeName>
</protein>
<dbReference type="EC" id="6.2.1.26" evidence="1"/>
<dbReference type="EMBL" id="BA000043">
    <property type="protein sequence ID" value="BAD77157.1"/>
    <property type="molecule type" value="Genomic_DNA"/>
</dbReference>
<dbReference type="RefSeq" id="WP_011232344.1">
    <property type="nucleotide sequence ID" value="NC_006510.1"/>
</dbReference>
<dbReference type="SMR" id="Q5KVX9"/>
<dbReference type="STRING" id="235909.GK2872"/>
<dbReference type="KEGG" id="gka:GK2872"/>
<dbReference type="eggNOG" id="COG0318">
    <property type="taxonomic scope" value="Bacteria"/>
</dbReference>
<dbReference type="HOGENOM" id="CLU_000022_59_7_9"/>
<dbReference type="UniPathway" id="UPA00079"/>
<dbReference type="UniPathway" id="UPA01057">
    <property type="reaction ID" value="UER00166"/>
</dbReference>
<dbReference type="Proteomes" id="UP000001172">
    <property type="component" value="Chromosome"/>
</dbReference>
<dbReference type="GO" id="GO:0005524">
    <property type="term" value="F:ATP binding"/>
    <property type="evidence" value="ECO:0007669"/>
    <property type="project" value="UniProtKB-KW"/>
</dbReference>
<dbReference type="GO" id="GO:0008756">
    <property type="term" value="F:o-succinylbenzoate-CoA ligase activity"/>
    <property type="evidence" value="ECO:0007669"/>
    <property type="project" value="UniProtKB-UniRule"/>
</dbReference>
<dbReference type="GO" id="GO:0009234">
    <property type="term" value="P:menaquinone biosynthetic process"/>
    <property type="evidence" value="ECO:0007669"/>
    <property type="project" value="UniProtKB-UniRule"/>
</dbReference>
<dbReference type="CDD" id="cd05912">
    <property type="entry name" value="OSB_CoA_lg"/>
    <property type="match status" value="1"/>
</dbReference>
<dbReference type="FunFam" id="3.30.300.30:FF:000008">
    <property type="entry name" value="2,3-dihydroxybenzoate-AMP ligase"/>
    <property type="match status" value="1"/>
</dbReference>
<dbReference type="Gene3D" id="3.30.300.30">
    <property type="match status" value="1"/>
</dbReference>
<dbReference type="Gene3D" id="3.40.50.12780">
    <property type="entry name" value="N-terminal domain of ligase-like"/>
    <property type="match status" value="1"/>
</dbReference>
<dbReference type="HAMAP" id="MF_00731">
    <property type="entry name" value="MenE"/>
    <property type="match status" value="1"/>
</dbReference>
<dbReference type="InterPro" id="IPR025110">
    <property type="entry name" value="AMP-bd_C"/>
</dbReference>
<dbReference type="InterPro" id="IPR045851">
    <property type="entry name" value="AMP-bd_C_sf"/>
</dbReference>
<dbReference type="InterPro" id="IPR020845">
    <property type="entry name" value="AMP-binding_CS"/>
</dbReference>
<dbReference type="InterPro" id="IPR000873">
    <property type="entry name" value="AMP-dep_synth/lig_dom"/>
</dbReference>
<dbReference type="InterPro" id="IPR042099">
    <property type="entry name" value="ANL_N_sf"/>
</dbReference>
<dbReference type="InterPro" id="IPR050237">
    <property type="entry name" value="ATP-dep_AMP-bd_enzyme"/>
</dbReference>
<dbReference type="InterPro" id="IPR010192">
    <property type="entry name" value="MenE"/>
</dbReference>
<dbReference type="NCBIfam" id="TIGR01923">
    <property type="entry name" value="menE"/>
    <property type="match status" value="1"/>
</dbReference>
<dbReference type="NCBIfam" id="NF002966">
    <property type="entry name" value="PRK03640.1"/>
    <property type="match status" value="1"/>
</dbReference>
<dbReference type="PANTHER" id="PTHR43767">
    <property type="entry name" value="LONG-CHAIN-FATTY-ACID--COA LIGASE"/>
    <property type="match status" value="1"/>
</dbReference>
<dbReference type="PANTHER" id="PTHR43767:SF1">
    <property type="entry name" value="NONRIBOSOMAL PEPTIDE SYNTHASE PES1 (EUROFUNG)-RELATED"/>
    <property type="match status" value="1"/>
</dbReference>
<dbReference type="Pfam" id="PF00501">
    <property type="entry name" value="AMP-binding"/>
    <property type="match status" value="1"/>
</dbReference>
<dbReference type="Pfam" id="PF13193">
    <property type="entry name" value="AMP-binding_C"/>
    <property type="match status" value="1"/>
</dbReference>
<dbReference type="SUPFAM" id="SSF56801">
    <property type="entry name" value="Acetyl-CoA synthetase-like"/>
    <property type="match status" value="1"/>
</dbReference>
<dbReference type="PROSITE" id="PS00455">
    <property type="entry name" value="AMP_BINDING"/>
    <property type="match status" value="1"/>
</dbReference>
<keyword id="KW-0067">ATP-binding</keyword>
<keyword id="KW-0436">Ligase</keyword>
<keyword id="KW-0474">Menaquinone biosynthesis</keyword>
<keyword id="KW-0547">Nucleotide-binding</keyword>
<keyword id="KW-1185">Reference proteome</keyword>
<feature type="chain" id="PRO_1000045964" description="2-succinylbenzoate--CoA ligase">
    <location>
        <begin position="1"/>
        <end position="490"/>
    </location>
</feature>
<proteinExistence type="inferred from homology"/>
<name>MENE_GEOKA</name>